<reference key="1">
    <citation type="submission" date="2002-12" db="EMBL/GenBank/DDBJ databases">
        <title>Complete genome sequence of Vibrio vulnificus CMCP6.</title>
        <authorList>
            <person name="Rhee J.H."/>
            <person name="Kim S.Y."/>
            <person name="Chung S.S."/>
            <person name="Kim J.J."/>
            <person name="Moon Y.H."/>
            <person name="Jeong H."/>
            <person name="Choy H.E."/>
        </authorList>
    </citation>
    <scope>NUCLEOTIDE SEQUENCE [LARGE SCALE GENOMIC DNA]</scope>
    <source>
        <strain>CMCP6</strain>
    </source>
</reference>
<sequence length="177" mass="19452">MADFTTIARPYAKAAFDFAVEKGQLDQWGQMLSFAAEVAQNEQISELLSGSMSADKLAELFIAICGEQVDEFGQNLLKVMAENGRLAALPDVCTLFFVLKKEHEKEIDVEVISATELSDEQCANISQKLEQRLERKVKLNCSVDEALLGGVIIRAGDLVIDNSARGRLNRLSDALQS</sequence>
<keyword id="KW-0066">ATP synthesis</keyword>
<keyword id="KW-0997">Cell inner membrane</keyword>
<keyword id="KW-1003">Cell membrane</keyword>
<keyword id="KW-0139">CF(1)</keyword>
<keyword id="KW-0375">Hydrogen ion transport</keyword>
<keyword id="KW-0406">Ion transport</keyword>
<keyword id="KW-0472">Membrane</keyword>
<keyword id="KW-0813">Transport</keyword>
<proteinExistence type="inferred from homology"/>
<evidence type="ECO:0000255" key="1">
    <source>
        <dbReference type="HAMAP-Rule" id="MF_01416"/>
    </source>
</evidence>
<name>ATPD_VIBVU</name>
<comment type="function">
    <text evidence="1">F(1)F(0) ATP synthase produces ATP from ADP in the presence of a proton or sodium gradient. F-type ATPases consist of two structural domains, F(1) containing the extramembraneous catalytic core and F(0) containing the membrane proton channel, linked together by a central stalk and a peripheral stalk. During catalysis, ATP synthesis in the catalytic domain of F(1) is coupled via a rotary mechanism of the central stalk subunits to proton translocation.</text>
</comment>
<comment type="function">
    <text evidence="1">This protein is part of the stalk that links CF(0) to CF(1). It either transmits conformational changes from CF(0) to CF(1) or is implicated in proton conduction.</text>
</comment>
<comment type="subunit">
    <text evidence="1">F-type ATPases have 2 components, F(1) - the catalytic core - and F(0) - the membrane proton channel. F(1) has five subunits: alpha(3), beta(3), gamma(1), delta(1), epsilon(1). F(0) has three main subunits: a(1), b(2) and c(10-14). The alpha and beta chains form an alternating ring which encloses part of the gamma chain. F(1) is attached to F(0) by a central stalk formed by the gamma and epsilon chains, while a peripheral stalk is formed by the delta and b chains.</text>
</comment>
<comment type="subcellular location">
    <subcellularLocation>
        <location evidence="1">Cell inner membrane</location>
        <topology evidence="1">Peripheral membrane protein</topology>
    </subcellularLocation>
</comment>
<comment type="similarity">
    <text evidence="1">Belongs to the ATPase delta chain family.</text>
</comment>
<feature type="chain" id="PRO_1000184830" description="ATP synthase subunit delta">
    <location>
        <begin position="1"/>
        <end position="177"/>
    </location>
</feature>
<accession>Q8DDH1</accession>
<gene>
    <name evidence="1" type="primary">atpH</name>
    <name type="ordered locus">VV1_1018</name>
</gene>
<protein>
    <recommendedName>
        <fullName evidence="1">ATP synthase subunit delta</fullName>
    </recommendedName>
    <alternativeName>
        <fullName evidence="1">ATP synthase F(1) sector subunit delta</fullName>
    </alternativeName>
    <alternativeName>
        <fullName evidence="1">F-type ATPase subunit delta</fullName>
        <shortName evidence="1">F-ATPase subunit delta</shortName>
    </alternativeName>
</protein>
<dbReference type="EMBL" id="AE016795">
    <property type="protein sequence ID" value="AAO09506.1"/>
    <property type="molecule type" value="Genomic_DNA"/>
</dbReference>
<dbReference type="RefSeq" id="WP_011079052.1">
    <property type="nucleotide sequence ID" value="NC_004459.3"/>
</dbReference>
<dbReference type="SMR" id="Q8DDH1"/>
<dbReference type="GeneID" id="93895307"/>
<dbReference type="KEGG" id="vvu:VV1_1018"/>
<dbReference type="HOGENOM" id="CLU_085114_3_0_6"/>
<dbReference type="Proteomes" id="UP000002275">
    <property type="component" value="Chromosome 1"/>
</dbReference>
<dbReference type="GO" id="GO:0005886">
    <property type="term" value="C:plasma membrane"/>
    <property type="evidence" value="ECO:0007669"/>
    <property type="project" value="UniProtKB-SubCell"/>
</dbReference>
<dbReference type="GO" id="GO:0045259">
    <property type="term" value="C:proton-transporting ATP synthase complex"/>
    <property type="evidence" value="ECO:0007669"/>
    <property type="project" value="UniProtKB-KW"/>
</dbReference>
<dbReference type="GO" id="GO:0046933">
    <property type="term" value="F:proton-transporting ATP synthase activity, rotational mechanism"/>
    <property type="evidence" value="ECO:0007669"/>
    <property type="project" value="UniProtKB-UniRule"/>
</dbReference>
<dbReference type="Gene3D" id="1.10.520.20">
    <property type="entry name" value="N-terminal domain of the delta subunit of the F1F0-ATP synthase"/>
    <property type="match status" value="1"/>
</dbReference>
<dbReference type="HAMAP" id="MF_01416">
    <property type="entry name" value="ATP_synth_delta_bact"/>
    <property type="match status" value="1"/>
</dbReference>
<dbReference type="InterPro" id="IPR026015">
    <property type="entry name" value="ATP_synth_OSCP/delta_N_sf"/>
</dbReference>
<dbReference type="InterPro" id="IPR020781">
    <property type="entry name" value="ATPase_OSCP/d_CS"/>
</dbReference>
<dbReference type="InterPro" id="IPR000711">
    <property type="entry name" value="ATPase_OSCP/dsu"/>
</dbReference>
<dbReference type="NCBIfam" id="TIGR01145">
    <property type="entry name" value="ATP_synt_delta"/>
    <property type="match status" value="1"/>
</dbReference>
<dbReference type="NCBIfam" id="NF004402">
    <property type="entry name" value="PRK05758.2-2"/>
    <property type="match status" value="1"/>
</dbReference>
<dbReference type="NCBIfam" id="NF004404">
    <property type="entry name" value="PRK05758.2-5"/>
    <property type="match status" value="1"/>
</dbReference>
<dbReference type="PANTHER" id="PTHR11910">
    <property type="entry name" value="ATP SYNTHASE DELTA CHAIN"/>
    <property type="match status" value="1"/>
</dbReference>
<dbReference type="Pfam" id="PF00213">
    <property type="entry name" value="OSCP"/>
    <property type="match status" value="1"/>
</dbReference>
<dbReference type="PRINTS" id="PR00125">
    <property type="entry name" value="ATPASEDELTA"/>
</dbReference>
<dbReference type="SUPFAM" id="SSF47928">
    <property type="entry name" value="N-terminal domain of the delta subunit of the F1F0-ATP synthase"/>
    <property type="match status" value="1"/>
</dbReference>
<dbReference type="PROSITE" id="PS00389">
    <property type="entry name" value="ATPASE_DELTA"/>
    <property type="match status" value="1"/>
</dbReference>
<organism>
    <name type="scientific">Vibrio vulnificus (strain CMCP6)</name>
    <dbReference type="NCBI Taxonomy" id="216895"/>
    <lineage>
        <taxon>Bacteria</taxon>
        <taxon>Pseudomonadati</taxon>
        <taxon>Pseudomonadota</taxon>
        <taxon>Gammaproteobacteria</taxon>
        <taxon>Vibrionales</taxon>
        <taxon>Vibrionaceae</taxon>
        <taxon>Vibrio</taxon>
    </lineage>
</organism>